<name>ISPF_SHIF8</name>
<reference key="1">
    <citation type="journal article" date="2006" name="BMC Genomics">
        <title>Complete genome sequence of Shigella flexneri 5b and comparison with Shigella flexneri 2a.</title>
        <authorList>
            <person name="Nie H."/>
            <person name="Yang F."/>
            <person name="Zhang X."/>
            <person name="Yang J."/>
            <person name="Chen L."/>
            <person name="Wang J."/>
            <person name="Xiong Z."/>
            <person name="Peng J."/>
            <person name="Sun L."/>
            <person name="Dong J."/>
            <person name="Xue Y."/>
            <person name="Xu X."/>
            <person name="Chen S."/>
            <person name="Yao Z."/>
            <person name="Shen Y."/>
            <person name="Jin Q."/>
        </authorList>
    </citation>
    <scope>NUCLEOTIDE SEQUENCE [LARGE SCALE GENOMIC DNA]</scope>
    <source>
        <strain>8401</strain>
    </source>
</reference>
<organism>
    <name type="scientific">Shigella flexneri serotype 5b (strain 8401)</name>
    <dbReference type="NCBI Taxonomy" id="373384"/>
    <lineage>
        <taxon>Bacteria</taxon>
        <taxon>Pseudomonadati</taxon>
        <taxon>Pseudomonadota</taxon>
        <taxon>Gammaproteobacteria</taxon>
        <taxon>Enterobacterales</taxon>
        <taxon>Enterobacteriaceae</taxon>
        <taxon>Shigella</taxon>
    </lineage>
</organism>
<accession>Q0T1H7</accession>
<dbReference type="EC" id="4.6.1.12" evidence="1"/>
<dbReference type="EMBL" id="CP000266">
    <property type="protein sequence ID" value="ABF04838.1"/>
    <property type="molecule type" value="Genomic_DNA"/>
</dbReference>
<dbReference type="RefSeq" id="WP_001219242.1">
    <property type="nucleotide sequence ID" value="NC_008258.1"/>
</dbReference>
<dbReference type="SMR" id="Q0T1H7"/>
<dbReference type="GeneID" id="93779260"/>
<dbReference type="KEGG" id="sfv:SFV_2752"/>
<dbReference type="HOGENOM" id="CLU_084630_2_0_6"/>
<dbReference type="UniPathway" id="UPA00056">
    <property type="reaction ID" value="UER00095"/>
</dbReference>
<dbReference type="Proteomes" id="UP000000659">
    <property type="component" value="Chromosome"/>
</dbReference>
<dbReference type="GO" id="GO:0008685">
    <property type="term" value="F:2-C-methyl-D-erythritol 2,4-cyclodiphosphate synthase activity"/>
    <property type="evidence" value="ECO:0007669"/>
    <property type="project" value="UniProtKB-UniRule"/>
</dbReference>
<dbReference type="GO" id="GO:0046872">
    <property type="term" value="F:metal ion binding"/>
    <property type="evidence" value="ECO:0007669"/>
    <property type="project" value="UniProtKB-KW"/>
</dbReference>
<dbReference type="GO" id="GO:0019288">
    <property type="term" value="P:isopentenyl diphosphate biosynthetic process, methylerythritol 4-phosphate pathway"/>
    <property type="evidence" value="ECO:0007669"/>
    <property type="project" value="UniProtKB-UniRule"/>
</dbReference>
<dbReference type="GO" id="GO:0016114">
    <property type="term" value="P:terpenoid biosynthetic process"/>
    <property type="evidence" value="ECO:0007669"/>
    <property type="project" value="InterPro"/>
</dbReference>
<dbReference type="CDD" id="cd00554">
    <property type="entry name" value="MECDP_synthase"/>
    <property type="match status" value="1"/>
</dbReference>
<dbReference type="FunFam" id="3.30.1330.50:FF:000001">
    <property type="entry name" value="2-C-methyl-D-erythritol 2,4-cyclodiphosphate synthase"/>
    <property type="match status" value="1"/>
</dbReference>
<dbReference type="Gene3D" id="3.30.1330.50">
    <property type="entry name" value="2-C-methyl-D-erythritol 2,4-cyclodiphosphate synthase"/>
    <property type="match status" value="1"/>
</dbReference>
<dbReference type="HAMAP" id="MF_00107">
    <property type="entry name" value="IspF"/>
    <property type="match status" value="1"/>
</dbReference>
<dbReference type="InterPro" id="IPR003526">
    <property type="entry name" value="MECDP_synthase"/>
</dbReference>
<dbReference type="InterPro" id="IPR020555">
    <property type="entry name" value="MECDP_synthase_CS"/>
</dbReference>
<dbReference type="InterPro" id="IPR036571">
    <property type="entry name" value="MECDP_synthase_sf"/>
</dbReference>
<dbReference type="NCBIfam" id="TIGR00151">
    <property type="entry name" value="ispF"/>
    <property type="match status" value="1"/>
</dbReference>
<dbReference type="PANTHER" id="PTHR43181">
    <property type="entry name" value="2-C-METHYL-D-ERYTHRITOL 2,4-CYCLODIPHOSPHATE SYNTHASE, CHLOROPLASTIC"/>
    <property type="match status" value="1"/>
</dbReference>
<dbReference type="PANTHER" id="PTHR43181:SF1">
    <property type="entry name" value="2-C-METHYL-D-ERYTHRITOL 2,4-CYCLODIPHOSPHATE SYNTHASE, CHLOROPLASTIC"/>
    <property type="match status" value="1"/>
</dbReference>
<dbReference type="Pfam" id="PF02542">
    <property type="entry name" value="YgbB"/>
    <property type="match status" value="1"/>
</dbReference>
<dbReference type="SUPFAM" id="SSF69765">
    <property type="entry name" value="IpsF-like"/>
    <property type="match status" value="1"/>
</dbReference>
<dbReference type="PROSITE" id="PS01350">
    <property type="entry name" value="ISPF"/>
    <property type="match status" value="1"/>
</dbReference>
<feature type="chain" id="PRO_1000022886" description="2-C-methyl-D-erythritol 2,4-cyclodiphosphate synthase">
    <location>
        <begin position="1"/>
        <end position="159"/>
    </location>
</feature>
<feature type="binding site" evidence="1">
    <location>
        <begin position="8"/>
        <end position="10"/>
    </location>
    <ligand>
        <name>4-CDP-2-C-methyl-D-erythritol 2-phosphate</name>
        <dbReference type="ChEBI" id="CHEBI:57919"/>
    </ligand>
</feature>
<feature type="binding site" evidence="1">
    <location>
        <position position="8"/>
    </location>
    <ligand>
        <name>a divalent metal cation</name>
        <dbReference type="ChEBI" id="CHEBI:60240"/>
    </ligand>
</feature>
<feature type="binding site" evidence="1">
    <location>
        <position position="10"/>
    </location>
    <ligand>
        <name>a divalent metal cation</name>
        <dbReference type="ChEBI" id="CHEBI:60240"/>
    </ligand>
</feature>
<feature type="binding site" evidence="1">
    <location>
        <begin position="34"/>
        <end position="35"/>
    </location>
    <ligand>
        <name>4-CDP-2-C-methyl-D-erythritol 2-phosphate</name>
        <dbReference type="ChEBI" id="CHEBI:57919"/>
    </ligand>
</feature>
<feature type="binding site" evidence="1">
    <location>
        <position position="42"/>
    </location>
    <ligand>
        <name>a divalent metal cation</name>
        <dbReference type="ChEBI" id="CHEBI:60240"/>
    </ligand>
</feature>
<feature type="binding site" evidence="1">
    <location>
        <begin position="56"/>
        <end position="58"/>
    </location>
    <ligand>
        <name>4-CDP-2-C-methyl-D-erythritol 2-phosphate</name>
        <dbReference type="ChEBI" id="CHEBI:57919"/>
    </ligand>
</feature>
<feature type="binding site" evidence="1">
    <location>
        <begin position="61"/>
        <end position="65"/>
    </location>
    <ligand>
        <name>4-CDP-2-C-methyl-D-erythritol 2-phosphate</name>
        <dbReference type="ChEBI" id="CHEBI:57919"/>
    </ligand>
</feature>
<feature type="binding site" evidence="1">
    <location>
        <begin position="100"/>
        <end position="106"/>
    </location>
    <ligand>
        <name>4-CDP-2-C-methyl-D-erythritol 2-phosphate</name>
        <dbReference type="ChEBI" id="CHEBI:57919"/>
    </ligand>
</feature>
<feature type="binding site" evidence="1">
    <location>
        <begin position="132"/>
        <end position="135"/>
    </location>
    <ligand>
        <name>4-CDP-2-C-methyl-D-erythritol 2-phosphate</name>
        <dbReference type="ChEBI" id="CHEBI:57919"/>
    </ligand>
</feature>
<feature type="binding site" evidence="1">
    <location>
        <position position="139"/>
    </location>
    <ligand>
        <name>4-CDP-2-C-methyl-D-erythritol 2-phosphate</name>
        <dbReference type="ChEBI" id="CHEBI:57919"/>
    </ligand>
</feature>
<feature type="binding site" evidence="1">
    <location>
        <position position="142"/>
    </location>
    <ligand>
        <name>4-CDP-2-C-methyl-D-erythritol 2-phosphate</name>
        <dbReference type="ChEBI" id="CHEBI:57919"/>
    </ligand>
</feature>
<feature type="site" description="Transition state stabilizer" evidence="1">
    <location>
        <position position="34"/>
    </location>
</feature>
<feature type="site" description="Transition state stabilizer" evidence="1">
    <location>
        <position position="133"/>
    </location>
</feature>
<proteinExistence type="inferred from homology"/>
<evidence type="ECO:0000255" key="1">
    <source>
        <dbReference type="HAMAP-Rule" id="MF_00107"/>
    </source>
</evidence>
<keyword id="KW-0414">Isoprene biosynthesis</keyword>
<keyword id="KW-0456">Lyase</keyword>
<keyword id="KW-0479">Metal-binding</keyword>
<gene>
    <name evidence="1" type="primary">ispF</name>
    <name type="ordered locus">SFV_2752</name>
</gene>
<sequence>MRIGHGFDVHAFGGEGPIIIGGVRIPYEKGLLAHSDGDVALHALTDALLGAAALGDIGKLFPDTDPAFKGADSRELLREAWRRIQAKGYTLGNVDVTIIAQAPKMLPHIPQMRVFIAEDLGCHMDDVNVKATTTEKLGFTGRGEGIACEAVALLIKATK</sequence>
<protein>
    <recommendedName>
        <fullName evidence="1">2-C-methyl-D-erythritol 2,4-cyclodiphosphate synthase</fullName>
        <shortName evidence="1">MECDP-synthase</shortName>
        <shortName evidence="1">MECPP-synthase</shortName>
        <shortName evidence="1">MECPS</shortName>
        <ecNumber evidence="1">4.6.1.12</ecNumber>
    </recommendedName>
</protein>
<comment type="function">
    <text evidence="1">Involved in the biosynthesis of isopentenyl diphosphate (IPP) and dimethylallyl diphosphate (DMAPP), two major building blocks of isoprenoid compounds. Catalyzes the conversion of 4-diphosphocytidyl-2-C-methyl-D-erythritol 2-phosphate (CDP-ME2P) to 2-C-methyl-D-erythritol 2,4-cyclodiphosphate (ME-CPP) with a corresponding release of cytidine 5-monophosphate (CMP).</text>
</comment>
<comment type="catalytic activity">
    <reaction evidence="1">
        <text>4-CDP-2-C-methyl-D-erythritol 2-phosphate = 2-C-methyl-D-erythritol 2,4-cyclic diphosphate + CMP</text>
        <dbReference type="Rhea" id="RHEA:23864"/>
        <dbReference type="ChEBI" id="CHEBI:57919"/>
        <dbReference type="ChEBI" id="CHEBI:58483"/>
        <dbReference type="ChEBI" id="CHEBI:60377"/>
        <dbReference type="EC" id="4.6.1.12"/>
    </reaction>
</comment>
<comment type="cofactor">
    <cofactor evidence="1">
        <name>a divalent metal cation</name>
        <dbReference type="ChEBI" id="CHEBI:60240"/>
    </cofactor>
    <text evidence="1">Binds 1 divalent metal cation per subunit.</text>
</comment>
<comment type="pathway">
    <text evidence="1">Isoprenoid biosynthesis; isopentenyl diphosphate biosynthesis via DXP pathway; isopentenyl diphosphate from 1-deoxy-D-xylulose 5-phosphate: step 4/6.</text>
</comment>
<comment type="subunit">
    <text evidence="1">Homotrimer.</text>
</comment>
<comment type="similarity">
    <text evidence="1">Belongs to the IspF family.</text>
</comment>